<dbReference type="EC" id="6.1.1.2" evidence="1"/>
<dbReference type="EMBL" id="BX569693">
    <property type="protein sequence ID" value="CAE07990.1"/>
    <property type="molecule type" value="Genomic_DNA"/>
</dbReference>
<dbReference type="RefSeq" id="WP_011128339.1">
    <property type="nucleotide sequence ID" value="NC_005070.1"/>
</dbReference>
<dbReference type="SMR" id="Q7TTU9"/>
<dbReference type="STRING" id="84588.SYNW1475"/>
<dbReference type="KEGG" id="syw:SYNW1475"/>
<dbReference type="eggNOG" id="COG0180">
    <property type="taxonomic scope" value="Bacteria"/>
</dbReference>
<dbReference type="HOGENOM" id="CLU_029244_1_4_3"/>
<dbReference type="Proteomes" id="UP000001422">
    <property type="component" value="Chromosome"/>
</dbReference>
<dbReference type="GO" id="GO:0005737">
    <property type="term" value="C:cytoplasm"/>
    <property type="evidence" value="ECO:0007669"/>
    <property type="project" value="UniProtKB-SubCell"/>
</dbReference>
<dbReference type="GO" id="GO:0005524">
    <property type="term" value="F:ATP binding"/>
    <property type="evidence" value="ECO:0007669"/>
    <property type="project" value="UniProtKB-UniRule"/>
</dbReference>
<dbReference type="GO" id="GO:0004830">
    <property type="term" value="F:tryptophan-tRNA ligase activity"/>
    <property type="evidence" value="ECO:0007669"/>
    <property type="project" value="UniProtKB-UniRule"/>
</dbReference>
<dbReference type="GO" id="GO:0006436">
    <property type="term" value="P:tryptophanyl-tRNA aminoacylation"/>
    <property type="evidence" value="ECO:0007669"/>
    <property type="project" value="UniProtKB-UniRule"/>
</dbReference>
<dbReference type="CDD" id="cd00806">
    <property type="entry name" value="TrpRS_core"/>
    <property type="match status" value="1"/>
</dbReference>
<dbReference type="FunFam" id="1.10.240.10:FF:000002">
    <property type="entry name" value="Tryptophan--tRNA ligase"/>
    <property type="match status" value="1"/>
</dbReference>
<dbReference type="Gene3D" id="3.40.50.620">
    <property type="entry name" value="HUPs"/>
    <property type="match status" value="1"/>
</dbReference>
<dbReference type="Gene3D" id="1.10.240.10">
    <property type="entry name" value="Tyrosyl-Transfer RNA Synthetase"/>
    <property type="match status" value="1"/>
</dbReference>
<dbReference type="HAMAP" id="MF_00140_B">
    <property type="entry name" value="Trp_tRNA_synth_B"/>
    <property type="match status" value="1"/>
</dbReference>
<dbReference type="InterPro" id="IPR002305">
    <property type="entry name" value="aa-tRNA-synth_Ic"/>
</dbReference>
<dbReference type="InterPro" id="IPR014729">
    <property type="entry name" value="Rossmann-like_a/b/a_fold"/>
</dbReference>
<dbReference type="InterPro" id="IPR002306">
    <property type="entry name" value="Trp-tRNA-ligase"/>
</dbReference>
<dbReference type="InterPro" id="IPR024109">
    <property type="entry name" value="Trp-tRNA-ligase_bac-type"/>
</dbReference>
<dbReference type="InterPro" id="IPR050203">
    <property type="entry name" value="Trp-tRNA_synthetase"/>
</dbReference>
<dbReference type="NCBIfam" id="TIGR00233">
    <property type="entry name" value="trpS"/>
    <property type="match status" value="1"/>
</dbReference>
<dbReference type="PANTHER" id="PTHR43766">
    <property type="entry name" value="TRYPTOPHAN--TRNA LIGASE, MITOCHONDRIAL"/>
    <property type="match status" value="1"/>
</dbReference>
<dbReference type="PANTHER" id="PTHR43766:SF1">
    <property type="entry name" value="TRYPTOPHAN--TRNA LIGASE, MITOCHONDRIAL"/>
    <property type="match status" value="1"/>
</dbReference>
<dbReference type="Pfam" id="PF00579">
    <property type="entry name" value="tRNA-synt_1b"/>
    <property type="match status" value="1"/>
</dbReference>
<dbReference type="PRINTS" id="PR01039">
    <property type="entry name" value="TRNASYNTHTRP"/>
</dbReference>
<dbReference type="SUPFAM" id="SSF52374">
    <property type="entry name" value="Nucleotidylyl transferase"/>
    <property type="match status" value="1"/>
</dbReference>
<gene>
    <name evidence="1" type="primary">trpS</name>
    <name type="ordered locus">SYNW1475</name>
</gene>
<accession>Q7TTU9</accession>
<proteinExistence type="inferred from homology"/>
<comment type="function">
    <text evidence="1">Catalyzes the attachment of tryptophan to tRNA(Trp).</text>
</comment>
<comment type="catalytic activity">
    <reaction evidence="1">
        <text>tRNA(Trp) + L-tryptophan + ATP = L-tryptophyl-tRNA(Trp) + AMP + diphosphate + H(+)</text>
        <dbReference type="Rhea" id="RHEA:24080"/>
        <dbReference type="Rhea" id="RHEA-COMP:9671"/>
        <dbReference type="Rhea" id="RHEA-COMP:9705"/>
        <dbReference type="ChEBI" id="CHEBI:15378"/>
        <dbReference type="ChEBI" id="CHEBI:30616"/>
        <dbReference type="ChEBI" id="CHEBI:33019"/>
        <dbReference type="ChEBI" id="CHEBI:57912"/>
        <dbReference type="ChEBI" id="CHEBI:78442"/>
        <dbReference type="ChEBI" id="CHEBI:78535"/>
        <dbReference type="ChEBI" id="CHEBI:456215"/>
        <dbReference type="EC" id="6.1.1.2"/>
    </reaction>
</comment>
<comment type="subunit">
    <text evidence="1">Homodimer.</text>
</comment>
<comment type="subcellular location">
    <subcellularLocation>
        <location evidence="1">Cytoplasm</location>
    </subcellularLocation>
</comment>
<comment type="similarity">
    <text evidence="1">Belongs to the class-I aminoacyl-tRNA synthetase family.</text>
</comment>
<protein>
    <recommendedName>
        <fullName evidence="1">Tryptophan--tRNA ligase</fullName>
        <ecNumber evidence="1">6.1.1.2</ecNumber>
    </recommendedName>
    <alternativeName>
        <fullName evidence="1">Tryptophanyl-tRNA synthetase</fullName>
        <shortName evidence="1">TrpRS</shortName>
    </alternativeName>
</protein>
<name>SYW_PARMW</name>
<organism>
    <name type="scientific">Parasynechococcus marenigrum (strain WH8102)</name>
    <dbReference type="NCBI Taxonomy" id="84588"/>
    <lineage>
        <taxon>Bacteria</taxon>
        <taxon>Bacillati</taxon>
        <taxon>Cyanobacteriota</taxon>
        <taxon>Cyanophyceae</taxon>
        <taxon>Synechococcales</taxon>
        <taxon>Prochlorococcaceae</taxon>
        <taxon>Parasynechococcus</taxon>
        <taxon>Parasynechococcus marenigrum</taxon>
    </lineage>
</organism>
<keyword id="KW-0030">Aminoacyl-tRNA synthetase</keyword>
<keyword id="KW-0067">ATP-binding</keyword>
<keyword id="KW-0963">Cytoplasm</keyword>
<keyword id="KW-0436">Ligase</keyword>
<keyword id="KW-0547">Nucleotide-binding</keyword>
<keyword id="KW-0648">Protein biosynthesis</keyword>
<sequence length="337" mass="37126">MGRPRVLSGVQPTGALHLGNWLGAIRNWVDLQDTHDTFVCVVDLHAITVPHDPARLADDTLNTAALYLACGMDPQRCSIFIQSQVAAHSELCWLLNCVTPLNWLERMIQFKEKAVKQGDNVSVGLLDYPVLMAADILLYDADLVPVGEDQKQHLELARDIAQQRINARFGSEERPVLKVPKPLILKEGARVMSLTDGRSKMSKSDPNEGSRITLLDPPELITKKIKRAKTDPKRGLEFSNPDRPETDNLLGLYAILSGKGREAAADECADMGWGQFKPLLADAAVAALEPIQARHKELMADRVELDRVLAKGRDQAESVANASLERVRDALGFAKCS</sequence>
<feature type="chain" id="PRO_0000136697" description="Tryptophan--tRNA ligase">
    <location>
        <begin position="1"/>
        <end position="337"/>
    </location>
</feature>
<feature type="short sequence motif" description="'HIGH' region" evidence="1">
    <location>
        <begin position="12"/>
        <end position="20"/>
    </location>
</feature>
<feature type="short sequence motif" description="'KMSKS' region" evidence="1">
    <location>
        <begin position="200"/>
        <end position="204"/>
    </location>
</feature>
<feature type="binding site" evidence="1">
    <location>
        <begin position="11"/>
        <end position="13"/>
    </location>
    <ligand>
        <name>ATP</name>
        <dbReference type="ChEBI" id="CHEBI:30616"/>
    </ligand>
</feature>
<feature type="binding site" evidence="1">
    <location>
        <begin position="19"/>
        <end position="20"/>
    </location>
    <ligand>
        <name>ATP</name>
        <dbReference type="ChEBI" id="CHEBI:30616"/>
    </ligand>
</feature>
<feature type="binding site" evidence="1">
    <location>
        <position position="135"/>
    </location>
    <ligand>
        <name>L-tryptophan</name>
        <dbReference type="ChEBI" id="CHEBI:57912"/>
    </ligand>
</feature>
<feature type="binding site" evidence="1">
    <location>
        <begin position="147"/>
        <end position="149"/>
    </location>
    <ligand>
        <name>ATP</name>
        <dbReference type="ChEBI" id="CHEBI:30616"/>
    </ligand>
</feature>
<feature type="binding site" evidence="1">
    <location>
        <position position="191"/>
    </location>
    <ligand>
        <name>ATP</name>
        <dbReference type="ChEBI" id="CHEBI:30616"/>
    </ligand>
</feature>
<feature type="binding site" evidence="1">
    <location>
        <begin position="200"/>
        <end position="204"/>
    </location>
    <ligand>
        <name>ATP</name>
        <dbReference type="ChEBI" id="CHEBI:30616"/>
    </ligand>
</feature>
<reference key="1">
    <citation type="journal article" date="2003" name="Nature">
        <title>The genome of a motile marine Synechococcus.</title>
        <authorList>
            <person name="Palenik B."/>
            <person name="Brahamsha B."/>
            <person name="Larimer F.W."/>
            <person name="Land M.L."/>
            <person name="Hauser L."/>
            <person name="Chain P."/>
            <person name="Lamerdin J.E."/>
            <person name="Regala W."/>
            <person name="Allen E.E."/>
            <person name="McCarren J."/>
            <person name="Paulsen I.T."/>
            <person name="Dufresne A."/>
            <person name="Partensky F."/>
            <person name="Webb E.A."/>
            <person name="Waterbury J."/>
        </authorList>
    </citation>
    <scope>NUCLEOTIDE SEQUENCE [LARGE SCALE GENOMIC DNA]</scope>
    <source>
        <strain>WH8102</strain>
    </source>
</reference>
<evidence type="ECO:0000255" key="1">
    <source>
        <dbReference type="HAMAP-Rule" id="MF_00140"/>
    </source>
</evidence>